<evidence type="ECO:0000255" key="1">
    <source>
        <dbReference type="HAMAP-Rule" id="MF_00372"/>
    </source>
</evidence>
<gene>
    <name evidence="1" type="primary">hutI</name>
    <name type="ordered locus">Sama_0080</name>
</gene>
<keyword id="KW-0963">Cytoplasm</keyword>
<keyword id="KW-0369">Histidine metabolism</keyword>
<keyword id="KW-0378">Hydrolase</keyword>
<keyword id="KW-0408">Iron</keyword>
<keyword id="KW-0479">Metal-binding</keyword>
<keyword id="KW-1185">Reference proteome</keyword>
<keyword id="KW-0862">Zinc</keyword>
<protein>
    <recommendedName>
        <fullName evidence="1">Imidazolonepropionase</fullName>
        <ecNumber evidence="1">3.5.2.7</ecNumber>
    </recommendedName>
    <alternativeName>
        <fullName evidence="1">Imidazolone-5-propionate hydrolase</fullName>
    </alternativeName>
</protein>
<name>HUTI_SHEAM</name>
<comment type="function">
    <text evidence="1">Catalyzes the hydrolytic cleavage of the carbon-nitrogen bond in imidazolone-5-propanoate to yield N-formimidoyl-L-glutamate. It is the third step in the universal histidine degradation pathway.</text>
</comment>
<comment type="catalytic activity">
    <reaction evidence="1">
        <text>4-imidazolone-5-propanoate + H2O = N-formimidoyl-L-glutamate</text>
        <dbReference type="Rhea" id="RHEA:23660"/>
        <dbReference type="ChEBI" id="CHEBI:15377"/>
        <dbReference type="ChEBI" id="CHEBI:58928"/>
        <dbReference type="ChEBI" id="CHEBI:77893"/>
        <dbReference type="EC" id="3.5.2.7"/>
    </reaction>
</comment>
<comment type="cofactor">
    <cofactor evidence="1">
        <name>Zn(2+)</name>
        <dbReference type="ChEBI" id="CHEBI:29105"/>
    </cofactor>
    <cofactor evidence="1">
        <name>Fe(3+)</name>
        <dbReference type="ChEBI" id="CHEBI:29034"/>
    </cofactor>
    <text evidence="1">Binds 1 zinc or iron ion per subunit.</text>
</comment>
<comment type="pathway">
    <text evidence="1">Amino-acid degradation; L-histidine degradation into L-glutamate; N-formimidoyl-L-glutamate from L-histidine: step 3/3.</text>
</comment>
<comment type="subcellular location">
    <subcellularLocation>
        <location evidence="1">Cytoplasm</location>
    </subcellularLocation>
</comment>
<comment type="similarity">
    <text evidence="1">Belongs to the metallo-dependent hydrolases superfamily. HutI family.</text>
</comment>
<proteinExistence type="inferred from homology"/>
<sequence>MSWDQVWIDINIATMDPSMNEAYGAITDAALAVKDGKIAWLGKRSDLPEFDVLATPVHRGHGGWLTPGLIDAHTHLVFAGNRANEFELRLQGASYEEIARAGGGIVSTVKACRDADEAELFDLARRRLNALAKEGVTTVEIKSGYGLDLDTELKLLRVARELGQHHHVDVVTTFLGAHAVPPEFKTLGEAGTDAYVDLVVNEMLPAVVAENLADAADVFCENIAFNLEQTERVLSAAKTLGLDIKLHAEQLSNLGGSELAARLGAKSVDHIEYLDEAGVKAIAQSGTCAVLLPGAFYFLRETKLPPIDLLRQYQVPMVLASDFNPGSSPICSTLLMLNMGCTLFRLTPEEALAGVTRNAARALGRDQRVGVLREGMEADFCLWRISTPAELAYSYGVNPLVDVVKGGRLIHQ</sequence>
<reference key="1">
    <citation type="submission" date="2006-12" db="EMBL/GenBank/DDBJ databases">
        <title>Complete sequence of Shewanella amazonensis SB2B.</title>
        <authorList>
            <consortium name="US DOE Joint Genome Institute"/>
            <person name="Copeland A."/>
            <person name="Lucas S."/>
            <person name="Lapidus A."/>
            <person name="Barry K."/>
            <person name="Detter J.C."/>
            <person name="Glavina del Rio T."/>
            <person name="Hammon N."/>
            <person name="Israni S."/>
            <person name="Dalin E."/>
            <person name="Tice H."/>
            <person name="Pitluck S."/>
            <person name="Munk A.C."/>
            <person name="Brettin T."/>
            <person name="Bruce D."/>
            <person name="Han C."/>
            <person name="Tapia R."/>
            <person name="Gilna P."/>
            <person name="Schmutz J."/>
            <person name="Larimer F."/>
            <person name="Land M."/>
            <person name="Hauser L."/>
            <person name="Kyrpides N."/>
            <person name="Mikhailova N."/>
            <person name="Fredrickson J."/>
            <person name="Richardson P."/>
        </authorList>
    </citation>
    <scope>NUCLEOTIDE SEQUENCE [LARGE SCALE GENOMIC DNA]</scope>
    <source>
        <strain>ATCC BAA-1098 / SB2B</strain>
    </source>
</reference>
<accession>A1S1N6</accession>
<dbReference type="EC" id="3.5.2.7" evidence="1"/>
<dbReference type="EMBL" id="CP000507">
    <property type="protein sequence ID" value="ABL98292.1"/>
    <property type="molecule type" value="Genomic_DNA"/>
</dbReference>
<dbReference type="RefSeq" id="WP_011758203.1">
    <property type="nucleotide sequence ID" value="NC_008700.1"/>
</dbReference>
<dbReference type="SMR" id="A1S1N6"/>
<dbReference type="STRING" id="326297.Sama_0080"/>
<dbReference type="KEGG" id="saz:Sama_0080"/>
<dbReference type="eggNOG" id="COG1228">
    <property type="taxonomic scope" value="Bacteria"/>
</dbReference>
<dbReference type="HOGENOM" id="CLU_041647_0_0_6"/>
<dbReference type="OrthoDB" id="9776455at2"/>
<dbReference type="UniPathway" id="UPA00379">
    <property type="reaction ID" value="UER00551"/>
</dbReference>
<dbReference type="Proteomes" id="UP000009175">
    <property type="component" value="Chromosome"/>
</dbReference>
<dbReference type="GO" id="GO:0005737">
    <property type="term" value="C:cytoplasm"/>
    <property type="evidence" value="ECO:0007669"/>
    <property type="project" value="UniProtKB-SubCell"/>
</dbReference>
<dbReference type="GO" id="GO:0050480">
    <property type="term" value="F:imidazolonepropionase activity"/>
    <property type="evidence" value="ECO:0007669"/>
    <property type="project" value="UniProtKB-UniRule"/>
</dbReference>
<dbReference type="GO" id="GO:0005506">
    <property type="term" value="F:iron ion binding"/>
    <property type="evidence" value="ECO:0007669"/>
    <property type="project" value="UniProtKB-UniRule"/>
</dbReference>
<dbReference type="GO" id="GO:0008270">
    <property type="term" value="F:zinc ion binding"/>
    <property type="evidence" value="ECO:0007669"/>
    <property type="project" value="UniProtKB-UniRule"/>
</dbReference>
<dbReference type="GO" id="GO:0019556">
    <property type="term" value="P:L-histidine catabolic process to glutamate and formamide"/>
    <property type="evidence" value="ECO:0007669"/>
    <property type="project" value="UniProtKB-UniPathway"/>
</dbReference>
<dbReference type="GO" id="GO:0019557">
    <property type="term" value="P:L-histidine catabolic process to glutamate and formate"/>
    <property type="evidence" value="ECO:0007669"/>
    <property type="project" value="UniProtKB-UniPathway"/>
</dbReference>
<dbReference type="CDD" id="cd01296">
    <property type="entry name" value="Imidazolone-5PH"/>
    <property type="match status" value="1"/>
</dbReference>
<dbReference type="FunFam" id="3.20.20.140:FF:000007">
    <property type="entry name" value="Imidazolonepropionase"/>
    <property type="match status" value="1"/>
</dbReference>
<dbReference type="Gene3D" id="3.20.20.140">
    <property type="entry name" value="Metal-dependent hydrolases"/>
    <property type="match status" value="1"/>
</dbReference>
<dbReference type="Gene3D" id="2.30.40.10">
    <property type="entry name" value="Urease, subunit C, domain 1"/>
    <property type="match status" value="1"/>
</dbReference>
<dbReference type="HAMAP" id="MF_00372">
    <property type="entry name" value="HutI"/>
    <property type="match status" value="1"/>
</dbReference>
<dbReference type="InterPro" id="IPR006680">
    <property type="entry name" value="Amidohydro-rel"/>
</dbReference>
<dbReference type="InterPro" id="IPR005920">
    <property type="entry name" value="HutI"/>
</dbReference>
<dbReference type="InterPro" id="IPR011059">
    <property type="entry name" value="Metal-dep_hydrolase_composite"/>
</dbReference>
<dbReference type="InterPro" id="IPR032466">
    <property type="entry name" value="Metal_Hydrolase"/>
</dbReference>
<dbReference type="NCBIfam" id="TIGR01224">
    <property type="entry name" value="hutI"/>
    <property type="match status" value="1"/>
</dbReference>
<dbReference type="PANTHER" id="PTHR42752">
    <property type="entry name" value="IMIDAZOLONEPROPIONASE"/>
    <property type="match status" value="1"/>
</dbReference>
<dbReference type="PANTHER" id="PTHR42752:SF1">
    <property type="entry name" value="IMIDAZOLONEPROPIONASE-RELATED"/>
    <property type="match status" value="1"/>
</dbReference>
<dbReference type="Pfam" id="PF01979">
    <property type="entry name" value="Amidohydro_1"/>
    <property type="match status" value="1"/>
</dbReference>
<dbReference type="SUPFAM" id="SSF51338">
    <property type="entry name" value="Composite domain of metallo-dependent hydrolases"/>
    <property type="match status" value="1"/>
</dbReference>
<dbReference type="SUPFAM" id="SSF51556">
    <property type="entry name" value="Metallo-dependent hydrolases"/>
    <property type="match status" value="1"/>
</dbReference>
<feature type="chain" id="PRO_0000306506" description="Imidazolonepropionase">
    <location>
        <begin position="1"/>
        <end position="412"/>
    </location>
</feature>
<feature type="binding site" evidence="1">
    <location>
        <position position="73"/>
    </location>
    <ligand>
        <name>Fe(3+)</name>
        <dbReference type="ChEBI" id="CHEBI:29034"/>
    </ligand>
</feature>
<feature type="binding site" evidence="1">
    <location>
        <position position="73"/>
    </location>
    <ligand>
        <name>Zn(2+)</name>
        <dbReference type="ChEBI" id="CHEBI:29105"/>
    </ligand>
</feature>
<feature type="binding site" evidence="1">
    <location>
        <position position="75"/>
    </location>
    <ligand>
        <name>Fe(3+)</name>
        <dbReference type="ChEBI" id="CHEBI:29034"/>
    </ligand>
</feature>
<feature type="binding site" evidence="1">
    <location>
        <position position="75"/>
    </location>
    <ligand>
        <name>Zn(2+)</name>
        <dbReference type="ChEBI" id="CHEBI:29105"/>
    </ligand>
</feature>
<feature type="binding site" evidence="1">
    <location>
        <position position="82"/>
    </location>
    <ligand>
        <name>4-imidazolone-5-propanoate</name>
        <dbReference type="ChEBI" id="CHEBI:77893"/>
    </ligand>
</feature>
<feature type="binding site" evidence="1">
    <location>
        <position position="145"/>
    </location>
    <ligand>
        <name>4-imidazolone-5-propanoate</name>
        <dbReference type="ChEBI" id="CHEBI:77893"/>
    </ligand>
</feature>
<feature type="binding site" evidence="1">
    <location>
        <position position="145"/>
    </location>
    <ligand>
        <name>N-formimidoyl-L-glutamate</name>
        <dbReference type="ChEBI" id="CHEBI:58928"/>
    </ligand>
</feature>
<feature type="binding site" evidence="1">
    <location>
        <position position="178"/>
    </location>
    <ligand>
        <name>4-imidazolone-5-propanoate</name>
        <dbReference type="ChEBI" id="CHEBI:77893"/>
    </ligand>
</feature>
<feature type="binding site" evidence="1">
    <location>
        <position position="247"/>
    </location>
    <ligand>
        <name>Fe(3+)</name>
        <dbReference type="ChEBI" id="CHEBI:29034"/>
    </ligand>
</feature>
<feature type="binding site" evidence="1">
    <location>
        <position position="247"/>
    </location>
    <ligand>
        <name>Zn(2+)</name>
        <dbReference type="ChEBI" id="CHEBI:29105"/>
    </ligand>
</feature>
<feature type="binding site" evidence="1">
    <location>
        <position position="250"/>
    </location>
    <ligand>
        <name>4-imidazolone-5-propanoate</name>
        <dbReference type="ChEBI" id="CHEBI:77893"/>
    </ligand>
</feature>
<feature type="binding site" evidence="1">
    <location>
        <position position="322"/>
    </location>
    <ligand>
        <name>Fe(3+)</name>
        <dbReference type="ChEBI" id="CHEBI:29034"/>
    </ligand>
</feature>
<feature type="binding site" evidence="1">
    <location>
        <position position="322"/>
    </location>
    <ligand>
        <name>Zn(2+)</name>
        <dbReference type="ChEBI" id="CHEBI:29105"/>
    </ligand>
</feature>
<feature type="binding site" evidence="1">
    <location>
        <position position="324"/>
    </location>
    <ligand>
        <name>N-formimidoyl-L-glutamate</name>
        <dbReference type="ChEBI" id="CHEBI:58928"/>
    </ligand>
</feature>
<feature type="binding site" evidence="1">
    <location>
        <position position="326"/>
    </location>
    <ligand>
        <name>N-formimidoyl-L-glutamate</name>
        <dbReference type="ChEBI" id="CHEBI:58928"/>
    </ligand>
</feature>
<feature type="binding site" evidence="1">
    <location>
        <position position="327"/>
    </location>
    <ligand>
        <name>4-imidazolone-5-propanoate</name>
        <dbReference type="ChEBI" id="CHEBI:77893"/>
    </ligand>
</feature>
<organism>
    <name type="scientific">Shewanella amazonensis (strain ATCC BAA-1098 / SB2B)</name>
    <dbReference type="NCBI Taxonomy" id="326297"/>
    <lineage>
        <taxon>Bacteria</taxon>
        <taxon>Pseudomonadati</taxon>
        <taxon>Pseudomonadota</taxon>
        <taxon>Gammaproteobacteria</taxon>
        <taxon>Alteromonadales</taxon>
        <taxon>Shewanellaceae</taxon>
        <taxon>Shewanella</taxon>
    </lineage>
</organism>